<comment type="function">
    <text evidence="1">Involved in transcription antitermination. Required for transcription of ribosomal RNA (rRNA) genes. Binds specifically to the boxA antiterminator sequence of the ribosomal RNA (rrn) operons.</text>
</comment>
<comment type="similarity">
    <text evidence="1">Belongs to the NusB family.</text>
</comment>
<gene>
    <name evidence="1" type="primary">nusB</name>
    <name type="ordered locus">CE1736</name>
</gene>
<proteinExistence type="inferred from homology"/>
<dbReference type="EMBL" id="BA000035">
    <property type="protein sequence ID" value="BAC18546.1"/>
    <property type="molecule type" value="Genomic_DNA"/>
</dbReference>
<dbReference type="RefSeq" id="WP_011075582.1">
    <property type="nucleotide sequence ID" value="NC_004369.1"/>
</dbReference>
<dbReference type="SMR" id="Q8FT35"/>
<dbReference type="STRING" id="196164.gene:10742157"/>
<dbReference type="KEGG" id="cef:CE1736"/>
<dbReference type="eggNOG" id="COG0781">
    <property type="taxonomic scope" value="Bacteria"/>
</dbReference>
<dbReference type="HOGENOM" id="CLU_087843_2_0_11"/>
<dbReference type="OrthoDB" id="3528057at2"/>
<dbReference type="Proteomes" id="UP000001409">
    <property type="component" value="Chromosome"/>
</dbReference>
<dbReference type="GO" id="GO:0005829">
    <property type="term" value="C:cytosol"/>
    <property type="evidence" value="ECO:0007669"/>
    <property type="project" value="TreeGrafter"/>
</dbReference>
<dbReference type="GO" id="GO:0003723">
    <property type="term" value="F:RNA binding"/>
    <property type="evidence" value="ECO:0007669"/>
    <property type="project" value="UniProtKB-UniRule"/>
</dbReference>
<dbReference type="GO" id="GO:0006353">
    <property type="term" value="P:DNA-templated transcription termination"/>
    <property type="evidence" value="ECO:0007669"/>
    <property type="project" value="UniProtKB-UniRule"/>
</dbReference>
<dbReference type="GO" id="GO:0031564">
    <property type="term" value="P:transcription antitermination"/>
    <property type="evidence" value="ECO:0007669"/>
    <property type="project" value="UniProtKB-KW"/>
</dbReference>
<dbReference type="Gene3D" id="1.10.940.10">
    <property type="entry name" value="NusB-like"/>
    <property type="match status" value="1"/>
</dbReference>
<dbReference type="HAMAP" id="MF_00073">
    <property type="entry name" value="NusB"/>
    <property type="match status" value="1"/>
</dbReference>
<dbReference type="InterPro" id="IPR035926">
    <property type="entry name" value="NusB-like_sf"/>
</dbReference>
<dbReference type="InterPro" id="IPR011605">
    <property type="entry name" value="NusB_fam"/>
</dbReference>
<dbReference type="InterPro" id="IPR006027">
    <property type="entry name" value="NusB_RsmB_TIM44"/>
</dbReference>
<dbReference type="NCBIfam" id="TIGR01951">
    <property type="entry name" value="nusB"/>
    <property type="match status" value="1"/>
</dbReference>
<dbReference type="PANTHER" id="PTHR11078:SF3">
    <property type="entry name" value="ANTITERMINATION NUSB DOMAIN-CONTAINING PROTEIN"/>
    <property type="match status" value="1"/>
</dbReference>
<dbReference type="PANTHER" id="PTHR11078">
    <property type="entry name" value="N UTILIZATION SUBSTANCE PROTEIN B-RELATED"/>
    <property type="match status" value="1"/>
</dbReference>
<dbReference type="Pfam" id="PF01029">
    <property type="entry name" value="NusB"/>
    <property type="match status" value="1"/>
</dbReference>
<dbReference type="SUPFAM" id="SSF48013">
    <property type="entry name" value="NusB-like"/>
    <property type="match status" value="1"/>
</dbReference>
<reference key="1">
    <citation type="journal article" date="2003" name="Genome Res.">
        <title>Comparative complete genome sequence analysis of the amino acid replacements responsible for the thermostability of Corynebacterium efficiens.</title>
        <authorList>
            <person name="Nishio Y."/>
            <person name="Nakamura Y."/>
            <person name="Kawarabayasi Y."/>
            <person name="Usuda Y."/>
            <person name="Kimura E."/>
            <person name="Sugimoto S."/>
            <person name="Matsui K."/>
            <person name="Yamagishi A."/>
            <person name="Kikuchi H."/>
            <person name="Ikeo K."/>
            <person name="Gojobori T."/>
        </authorList>
    </citation>
    <scope>NUCLEOTIDE SEQUENCE [LARGE SCALE GENOMIC DNA]</scope>
    <source>
        <strain>DSM 44549 / YS-314 / AJ 12310 / JCM 11189 / NBRC 100395</strain>
    </source>
</reference>
<sequence length="188" mass="20611">MSESRQGYKRHGARYKARRRAVDILFEAESRDVDPVAIIDDRKTLSNAVDPVVAPVAEYTEAIINGVAVELDTIDDLLSEHIADTWLLERLPSVDRAVLRVACWEMLYNPDVPVTTAVVEAVEIASQYSTDKAGAYINATLDNMASKVDELRERAANPGAVSGSDAPVAPWDDSEELPAEDEAEDSRP</sequence>
<organism>
    <name type="scientific">Corynebacterium efficiens (strain DSM 44549 / YS-314 / AJ 12310 / JCM 11189 / NBRC 100395)</name>
    <dbReference type="NCBI Taxonomy" id="196164"/>
    <lineage>
        <taxon>Bacteria</taxon>
        <taxon>Bacillati</taxon>
        <taxon>Actinomycetota</taxon>
        <taxon>Actinomycetes</taxon>
        <taxon>Mycobacteriales</taxon>
        <taxon>Corynebacteriaceae</taxon>
        <taxon>Corynebacterium</taxon>
    </lineage>
</organism>
<name>NUSB_COREF</name>
<accession>Q8FT35</accession>
<protein>
    <recommendedName>
        <fullName evidence="1">Transcription antitermination protein NusB</fullName>
    </recommendedName>
    <alternativeName>
        <fullName evidence="1">Antitermination factor NusB</fullName>
    </alternativeName>
</protein>
<feature type="chain" id="PRO_0000176532" description="Transcription antitermination protein NusB">
    <location>
        <begin position="1"/>
        <end position="188"/>
    </location>
</feature>
<feature type="region of interest" description="Disordered" evidence="2">
    <location>
        <begin position="154"/>
        <end position="188"/>
    </location>
</feature>
<feature type="compositionally biased region" description="Acidic residues" evidence="2">
    <location>
        <begin position="172"/>
        <end position="188"/>
    </location>
</feature>
<keyword id="KW-1185">Reference proteome</keyword>
<keyword id="KW-0694">RNA-binding</keyword>
<keyword id="KW-0804">Transcription</keyword>
<keyword id="KW-0889">Transcription antitermination</keyword>
<keyword id="KW-0805">Transcription regulation</keyword>
<evidence type="ECO:0000255" key="1">
    <source>
        <dbReference type="HAMAP-Rule" id="MF_00073"/>
    </source>
</evidence>
<evidence type="ECO:0000256" key="2">
    <source>
        <dbReference type="SAM" id="MobiDB-lite"/>
    </source>
</evidence>